<accession>Q17YT5</accession>
<organism>
    <name type="scientific">Helicobacter acinonychis (strain Sheeba)</name>
    <dbReference type="NCBI Taxonomy" id="382638"/>
    <lineage>
        <taxon>Bacteria</taxon>
        <taxon>Pseudomonadati</taxon>
        <taxon>Campylobacterota</taxon>
        <taxon>Epsilonproteobacteria</taxon>
        <taxon>Campylobacterales</taxon>
        <taxon>Helicobacteraceae</taxon>
        <taxon>Helicobacter</taxon>
    </lineage>
</organism>
<dbReference type="EMBL" id="AM260522">
    <property type="protein sequence ID" value="CAJ99191.1"/>
    <property type="molecule type" value="Genomic_DNA"/>
</dbReference>
<dbReference type="RefSeq" id="WP_011577306.1">
    <property type="nucleotide sequence ID" value="NC_008229.1"/>
</dbReference>
<dbReference type="SMR" id="Q17YT5"/>
<dbReference type="STRING" id="382638.Hac_0352"/>
<dbReference type="GeneID" id="31757863"/>
<dbReference type="KEGG" id="hac:Hac_0352"/>
<dbReference type="eggNOG" id="COG1186">
    <property type="taxonomic scope" value="Bacteria"/>
</dbReference>
<dbReference type="HOGENOM" id="CLU_036856_6_0_7"/>
<dbReference type="OrthoDB" id="9806673at2"/>
<dbReference type="BioCyc" id="HACI382638:HAC_RS01585-MONOMER"/>
<dbReference type="Proteomes" id="UP000000775">
    <property type="component" value="Chromosome"/>
</dbReference>
<dbReference type="GO" id="GO:0005737">
    <property type="term" value="C:cytoplasm"/>
    <property type="evidence" value="ECO:0007669"/>
    <property type="project" value="UniProtKB-SubCell"/>
</dbReference>
<dbReference type="GO" id="GO:0016149">
    <property type="term" value="F:translation release factor activity, codon specific"/>
    <property type="evidence" value="ECO:0007669"/>
    <property type="project" value="UniProtKB-UniRule"/>
</dbReference>
<dbReference type="FunFam" id="3.30.160.20:FF:000010">
    <property type="entry name" value="Peptide chain release factor 2"/>
    <property type="match status" value="1"/>
</dbReference>
<dbReference type="Gene3D" id="3.30.160.20">
    <property type="match status" value="1"/>
</dbReference>
<dbReference type="Gene3D" id="3.30.70.1660">
    <property type="match status" value="1"/>
</dbReference>
<dbReference type="Gene3D" id="1.20.58.410">
    <property type="entry name" value="Release factor"/>
    <property type="match status" value="1"/>
</dbReference>
<dbReference type="HAMAP" id="MF_00094">
    <property type="entry name" value="Rel_fac_2"/>
    <property type="match status" value="1"/>
</dbReference>
<dbReference type="InterPro" id="IPR005139">
    <property type="entry name" value="PCRF"/>
</dbReference>
<dbReference type="InterPro" id="IPR000352">
    <property type="entry name" value="Pep_chain_release_fac_I"/>
</dbReference>
<dbReference type="InterPro" id="IPR045853">
    <property type="entry name" value="Pep_chain_release_fac_I_sf"/>
</dbReference>
<dbReference type="InterPro" id="IPR004374">
    <property type="entry name" value="PrfB"/>
</dbReference>
<dbReference type="NCBIfam" id="TIGR00020">
    <property type="entry name" value="prfB"/>
    <property type="match status" value="1"/>
</dbReference>
<dbReference type="PANTHER" id="PTHR43116:SF3">
    <property type="entry name" value="CLASS I PEPTIDE CHAIN RELEASE FACTOR"/>
    <property type="match status" value="1"/>
</dbReference>
<dbReference type="PANTHER" id="PTHR43116">
    <property type="entry name" value="PEPTIDE CHAIN RELEASE FACTOR 2"/>
    <property type="match status" value="1"/>
</dbReference>
<dbReference type="Pfam" id="PF03462">
    <property type="entry name" value="PCRF"/>
    <property type="match status" value="1"/>
</dbReference>
<dbReference type="Pfam" id="PF00472">
    <property type="entry name" value="RF-1"/>
    <property type="match status" value="1"/>
</dbReference>
<dbReference type="SMART" id="SM00937">
    <property type="entry name" value="PCRF"/>
    <property type="match status" value="1"/>
</dbReference>
<dbReference type="SUPFAM" id="SSF75620">
    <property type="entry name" value="Release factor"/>
    <property type="match status" value="1"/>
</dbReference>
<dbReference type="PROSITE" id="PS00745">
    <property type="entry name" value="RF_PROK_I"/>
    <property type="match status" value="1"/>
</dbReference>
<sequence>MDNYTYSELLKSLQNKCDNIALIIKPEKVKQKLERIEKEQEDPNFWQDVLKARDTNKEKVRLNRLLETYQKTKNALDESVELFEIAQNDNDEVTLSLLYEEAPILEHGVQKVEIEIMLSGEHDASNAIITIQPGAGGTESQDWASILYRMYLRWAERRGFKSEILDYQDGEEAGIKGVAFIIKGENAYGYLKNESGVHRLVRISPFDANAKRHTSFASVQISPELDDDIDIEIDEKDVRYDYYRASGAGGQHVNKTESAVRITHFPTGIVVQCQNDRSQHKNKASALKMLKSKLYELELEKQQSTAKNEEKSEIGWGHQIRSYVLAPYQQVKDARSNIAYSNVEAILDGDIDAILEGVLIAKA</sequence>
<evidence type="ECO:0000255" key="1">
    <source>
        <dbReference type="HAMAP-Rule" id="MF_00094"/>
    </source>
</evidence>
<protein>
    <recommendedName>
        <fullName evidence="1">Peptide chain release factor 2</fullName>
        <shortName evidence="1">RF-2</shortName>
    </recommendedName>
</protein>
<gene>
    <name evidence="1" type="primary">prfB</name>
    <name type="ordered locus">Hac_0352</name>
</gene>
<comment type="function">
    <text evidence="1">Peptide chain release factor 2 directs the termination of translation in response to the peptide chain termination codons UGA and UAA.</text>
</comment>
<comment type="subcellular location">
    <subcellularLocation>
        <location evidence="1">Cytoplasm</location>
    </subcellularLocation>
</comment>
<comment type="PTM">
    <text evidence="1">Methylated by PrmC. Methylation increases the termination efficiency of RF2.</text>
</comment>
<comment type="similarity">
    <text evidence="1">Belongs to the prokaryotic/mitochondrial release factor family.</text>
</comment>
<keyword id="KW-0963">Cytoplasm</keyword>
<keyword id="KW-0488">Methylation</keyword>
<keyword id="KW-0648">Protein biosynthesis</keyword>
<name>RF2_HELAH</name>
<proteinExistence type="inferred from homology"/>
<reference key="1">
    <citation type="journal article" date="2006" name="PLoS Genet.">
        <title>Who ate whom? Adaptive Helicobacter genomic changes that accompanied a host jump from early humans to large felines.</title>
        <authorList>
            <person name="Eppinger M."/>
            <person name="Baar C."/>
            <person name="Linz B."/>
            <person name="Raddatz G."/>
            <person name="Lanz C."/>
            <person name="Keller H."/>
            <person name="Morelli G."/>
            <person name="Gressmann H."/>
            <person name="Achtman M."/>
            <person name="Schuster S.C."/>
        </authorList>
    </citation>
    <scope>NUCLEOTIDE SEQUENCE [LARGE SCALE GENOMIC DNA]</scope>
    <source>
        <strain>Sheeba</strain>
    </source>
</reference>
<feature type="chain" id="PRO_1000004988" description="Peptide chain release factor 2">
    <location>
        <begin position="1"/>
        <end position="363"/>
    </location>
</feature>
<feature type="modified residue" description="N5-methylglutamine" evidence="1">
    <location>
        <position position="251"/>
    </location>
</feature>